<organism>
    <name type="scientific">Nostoc punctiforme (strain ATCC 29133 / PCC 73102)</name>
    <dbReference type="NCBI Taxonomy" id="63737"/>
    <lineage>
        <taxon>Bacteria</taxon>
        <taxon>Bacillati</taxon>
        <taxon>Cyanobacteriota</taxon>
        <taxon>Cyanophyceae</taxon>
        <taxon>Nostocales</taxon>
        <taxon>Nostocaceae</taxon>
        <taxon>Nostoc</taxon>
    </lineage>
</organism>
<proteinExistence type="inferred from homology"/>
<protein>
    <recommendedName>
        <fullName evidence="1">Large ribosomal subunit protein bL34</fullName>
    </recommendedName>
    <alternativeName>
        <fullName evidence="3">50S ribosomal protein L34</fullName>
    </alternativeName>
</protein>
<keyword id="KW-1185">Reference proteome</keyword>
<keyword id="KW-0687">Ribonucleoprotein</keyword>
<keyword id="KW-0689">Ribosomal protein</keyword>
<sequence length="44" mass="5193">MKRTLGGTSRKRKRTSGFRARMRTPDGRNVIRARRKKGRHRLSV</sequence>
<accession>B2J0Q6</accession>
<name>RL34_NOSP7</name>
<dbReference type="EMBL" id="CP001037">
    <property type="protein sequence ID" value="ACC80273.1"/>
    <property type="molecule type" value="Genomic_DNA"/>
</dbReference>
<dbReference type="SMR" id="B2J0Q6"/>
<dbReference type="STRING" id="63737.Npun_R1588"/>
<dbReference type="EnsemblBacteria" id="ACC80273">
    <property type="protein sequence ID" value="ACC80273"/>
    <property type="gene ID" value="Npun_R1588"/>
</dbReference>
<dbReference type="KEGG" id="npu:Npun_R1588"/>
<dbReference type="eggNOG" id="COG0230">
    <property type="taxonomic scope" value="Bacteria"/>
</dbReference>
<dbReference type="HOGENOM" id="CLU_129938_2_0_3"/>
<dbReference type="OrthoDB" id="9804164at2"/>
<dbReference type="PhylomeDB" id="B2J0Q6"/>
<dbReference type="Proteomes" id="UP000001191">
    <property type="component" value="Chromosome"/>
</dbReference>
<dbReference type="GO" id="GO:1990904">
    <property type="term" value="C:ribonucleoprotein complex"/>
    <property type="evidence" value="ECO:0007669"/>
    <property type="project" value="UniProtKB-KW"/>
</dbReference>
<dbReference type="GO" id="GO:0005840">
    <property type="term" value="C:ribosome"/>
    <property type="evidence" value="ECO:0007669"/>
    <property type="project" value="UniProtKB-KW"/>
</dbReference>
<dbReference type="GO" id="GO:0003735">
    <property type="term" value="F:structural constituent of ribosome"/>
    <property type="evidence" value="ECO:0007669"/>
    <property type="project" value="InterPro"/>
</dbReference>
<dbReference type="GO" id="GO:0006412">
    <property type="term" value="P:translation"/>
    <property type="evidence" value="ECO:0007669"/>
    <property type="project" value="UniProtKB-UniRule"/>
</dbReference>
<dbReference type="Gene3D" id="1.10.287.3980">
    <property type="match status" value="1"/>
</dbReference>
<dbReference type="HAMAP" id="MF_00391">
    <property type="entry name" value="Ribosomal_bL34"/>
    <property type="match status" value="1"/>
</dbReference>
<dbReference type="InterPro" id="IPR000271">
    <property type="entry name" value="Ribosomal_bL34"/>
</dbReference>
<dbReference type="InterPro" id="IPR020939">
    <property type="entry name" value="Ribosomal_bL34_CS"/>
</dbReference>
<dbReference type="NCBIfam" id="TIGR01030">
    <property type="entry name" value="rpmH_bact"/>
    <property type="match status" value="1"/>
</dbReference>
<dbReference type="PANTHER" id="PTHR14503:SF4">
    <property type="entry name" value="LARGE RIBOSOMAL SUBUNIT PROTEIN BL34M"/>
    <property type="match status" value="1"/>
</dbReference>
<dbReference type="PANTHER" id="PTHR14503">
    <property type="entry name" value="MITOCHONDRIAL RIBOSOMAL PROTEIN 34 FAMILY MEMBER"/>
    <property type="match status" value="1"/>
</dbReference>
<dbReference type="Pfam" id="PF00468">
    <property type="entry name" value="Ribosomal_L34"/>
    <property type="match status" value="1"/>
</dbReference>
<dbReference type="PROSITE" id="PS00784">
    <property type="entry name" value="RIBOSOMAL_L34"/>
    <property type="match status" value="1"/>
</dbReference>
<comment type="similarity">
    <text evidence="1">Belongs to the bacterial ribosomal protein bL34 family.</text>
</comment>
<gene>
    <name evidence="1" type="primary">rpmH</name>
    <name evidence="1" type="synonym">rpl34</name>
    <name type="ordered locus">Npun_R1588</name>
</gene>
<evidence type="ECO:0000255" key="1">
    <source>
        <dbReference type="HAMAP-Rule" id="MF_00391"/>
    </source>
</evidence>
<evidence type="ECO:0000256" key="2">
    <source>
        <dbReference type="SAM" id="MobiDB-lite"/>
    </source>
</evidence>
<evidence type="ECO:0000305" key="3"/>
<reference key="1">
    <citation type="journal article" date="2013" name="Plant Physiol.">
        <title>A Nostoc punctiforme Sugar Transporter Necessary to Establish a Cyanobacterium-Plant Symbiosis.</title>
        <authorList>
            <person name="Ekman M."/>
            <person name="Picossi S."/>
            <person name="Campbell E.L."/>
            <person name="Meeks J.C."/>
            <person name="Flores E."/>
        </authorList>
    </citation>
    <scope>NUCLEOTIDE SEQUENCE [LARGE SCALE GENOMIC DNA]</scope>
    <source>
        <strain>ATCC 29133 / PCC 73102</strain>
    </source>
</reference>
<feature type="chain" id="PRO_1000196078" description="Large ribosomal subunit protein bL34">
    <location>
        <begin position="1"/>
        <end position="44"/>
    </location>
</feature>
<feature type="region of interest" description="Disordered" evidence="2">
    <location>
        <begin position="1"/>
        <end position="44"/>
    </location>
</feature>
<feature type="compositionally biased region" description="Basic residues" evidence="2">
    <location>
        <begin position="1"/>
        <end position="22"/>
    </location>
</feature>
<feature type="compositionally biased region" description="Basic residues" evidence="2">
    <location>
        <begin position="31"/>
        <end position="44"/>
    </location>
</feature>